<gene>
    <name type="primary">cpeB</name>
</gene>
<dbReference type="EMBL" id="X63073">
    <property type="protein sequence ID" value="CAA44794.1"/>
    <property type="molecule type" value="Genomic_DNA"/>
</dbReference>
<dbReference type="SMR" id="P29297"/>
<dbReference type="GO" id="GO:0030089">
    <property type="term" value="C:phycobilisome"/>
    <property type="evidence" value="ECO:0007669"/>
    <property type="project" value="UniProtKB-KW"/>
</dbReference>
<dbReference type="GO" id="GO:0031676">
    <property type="term" value="C:plasma membrane-derived thylakoid membrane"/>
    <property type="evidence" value="ECO:0007669"/>
    <property type="project" value="UniProtKB-SubCell"/>
</dbReference>
<dbReference type="GO" id="GO:0015979">
    <property type="term" value="P:photosynthesis"/>
    <property type="evidence" value="ECO:0007669"/>
    <property type="project" value="UniProtKB-KW"/>
</dbReference>
<dbReference type="Gene3D" id="1.10.490.20">
    <property type="entry name" value="Phycocyanins"/>
    <property type="match status" value="1"/>
</dbReference>
<dbReference type="InterPro" id="IPR009050">
    <property type="entry name" value="Globin-like_sf"/>
</dbReference>
<dbReference type="InterPro" id="IPR012128">
    <property type="entry name" value="Phycobilisome_asu/bsu"/>
</dbReference>
<dbReference type="InterPro" id="IPR038719">
    <property type="entry name" value="Phycobilisome_asu/bsu_sf"/>
</dbReference>
<dbReference type="PANTHER" id="PTHR34011:SF7">
    <property type="entry name" value="C-PHYCOCYANIN BETA SUBUNIT"/>
    <property type="match status" value="1"/>
</dbReference>
<dbReference type="PANTHER" id="PTHR34011">
    <property type="entry name" value="PHYCOBILISOME 32.1 KDA LINKER POLYPEPTIDE, PHYCOCYANIN-ASSOCIATED, ROD 2-RELATED"/>
    <property type="match status" value="1"/>
</dbReference>
<dbReference type="Pfam" id="PF00502">
    <property type="entry name" value="Phycobilisome"/>
    <property type="match status" value="1"/>
</dbReference>
<dbReference type="PIRSF" id="PIRSF000081">
    <property type="entry name" value="Phycocyanin"/>
    <property type="match status" value="1"/>
</dbReference>
<dbReference type="SUPFAM" id="SSF46458">
    <property type="entry name" value="Globin-like"/>
    <property type="match status" value="1"/>
</dbReference>
<organism>
    <name type="scientific">Pseudanabaena tenuis (strain PCC 7409)</name>
    <dbReference type="NCBI Taxonomy" id="29415"/>
    <lineage>
        <taxon>Bacteria</taxon>
        <taxon>Bacillati</taxon>
        <taxon>Cyanobacteriota</taxon>
        <taxon>Cyanophyceae</taxon>
        <taxon>Pseudanabaenales</taxon>
        <taxon>Pseudanabaenaceae</taxon>
        <taxon>Pseudanabaena</taxon>
    </lineage>
</organism>
<accession>P29297</accession>
<reference key="1">
    <citation type="journal article" date="1991" name="Mol. Microbiol.">
        <title>Molecular cloning and transcriptional analysis of the cpeBA operon of the cyanobacterium Pseudanabaena species PCC7409.</title>
        <authorList>
            <person name="Dubbs J.M."/>
            <person name="Bryant D.A."/>
        </authorList>
    </citation>
    <scope>NUCLEOTIDE SEQUENCE [GENOMIC DNA]</scope>
</reference>
<protein>
    <recommendedName>
        <fullName>C-phycoerythrin beta chain</fullName>
    </recommendedName>
</protein>
<sequence length="185" mass="19365">MPLDAFSRAVVTADASTSVVSDINALKAFVASGNRRLDAVNAIASNASCAVSDAIAGIVCENQGLIQAGGNLYPNRRFAACLRDTEIILRYVTYALLAGDSSVLDDRALNGLKETYSALGVPTTSTIRAVQILKAIAVAHIQGTNTEARAGAKYRKNETPLVEDRCASIAAEAAGYFDRVIAALS</sequence>
<proteinExistence type="inferred from homology"/>
<comment type="function">
    <text>Light-harvesting photosynthetic bile pigment-protein from the phycobiliprotein complex.</text>
</comment>
<comment type="subunit">
    <text evidence="1">Heterodimer of an alpha and a beta chain.</text>
</comment>
<comment type="subcellular location">
    <subcellularLocation>
        <location evidence="1">Cellular thylakoid membrane</location>
        <topology evidence="1">Peripheral membrane protein</topology>
        <orientation evidence="1">Cytoplasmic side</orientation>
    </subcellularLocation>
    <text evidence="1">Forms the periphery of the phycobilisome rod.</text>
</comment>
<comment type="PTM">
    <text evidence="1">Contains three covalently linked bilin chromophores.</text>
</comment>
<comment type="similarity">
    <text evidence="2">Belongs to the phycobiliprotein family.</text>
</comment>
<name>PHEB_PSETP</name>
<feature type="chain" id="PRO_0000199199" description="C-phycoerythrin beta chain">
    <location>
        <begin position="1"/>
        <end position="185"/>
    </location>
</feature>
<feature type="binding site" description="covalent" evidence="1">
    <location>
        <position position="49"/>
    </location>
    <ligand>
        <name>(2R,3E)-phycoerythrobilin</name>
        <dbReference type="ChEBI" id="CHEBI:85276"/>
        <label>1</label>
    </ligand>
</feature>
<feature type="binding site" description="covalent" evidence="1">
    <location>
        <position position="60"/>
    </location>
    <ligand>
        <name>(2R,3E)-phycoerythrobilin</name>
        <dbReference type="ChEBI" id="CHEBI:85276"/>
        <label>1</label>
    </ligand>
</feature>
<feature type="binding site" description="covalent" evidence="1">
    <location>
        <position position="81"/>
    </location>
    <ligand>
        <name>(2R,3E)-phycoerythrobilin</name>
        <dbReference type="ChEBI" id="CHEBI:85276"/>
        <label>2</label>
    </ligand>
</feature>
<feature type="binding site" description="covalent" evidence="1">
    <location>
        <position position="166"/>
    </location>
    <ligand>
        <name>(2R,3E)-phycoerythrobilin</name>
        <dbReference type="ChEBI" id="CHEBI:85276"/>
        <label>3</label>
    </ligand>
</feature>
<feature type="modified residue" description="N4-methylasparagine" evidence="1">
    <location>
        <position position="71"/>
    </location>
</feature>
<keyword id="KW-0042">Antenna complex</keyword>
<keyword id="KW-0089">Bile pigment</keyword>
<keyword id="KW-0157">Chromophore</keyword>
<keyword id="KW-0249">Electron transport</keyword>
<keyword id="KW-0472">Membrane</keyword>
<keyword id="KW-0488">Methylation</keyword>
<keyword id="KW-0602">Photosynthesis</keyword>
<keyword id="KW-0605">Phycobilisome</keyword>
<keyword id="KW-0793">Thylakoid</keyword>
<keyword id="KW-0813">Transport</keyword>
<evidence type="ECO:0000250" key="1"/>
<evidence type="ECO:0000305" key="2"/>